<comment type="function">
    <text evidence="1">RNA-binding component of the eukaryotic translation initiation factor 3 (eIF-3) complex, which is involved in protein synthesis of a specialized repertoire of mRNAs and, together with other initiation factors, stimulates binding of mRNA and methionyl-tRNAi to the 40S ribosome. The eIF-3 complex specifically targets and initiates translation of a subset of mRNAs involved in cell proliferation. This subunit can bind 18S rRNA.</text>
</comment>
<comment type="subunit">
    <text evidence="1">Component of the eukaryotic translation initiation factor 3 (eIF-3) complex.</text>
</comment>
<comment type="subcellular location">
    <subcellularLocation>
        <location evidence="1">Cytoplasm</location>
    </subcellularLocation>
</comment>
<comment type="similarity">
    <text evidence="1">Belongs to the eIF-3 subunit G family.</text>
</comment>
<dbReference type="EMBL" id="DQ497197">
    <property type="protein sequence ID" value="ABF55962.1"/>
    <property type="molecule type" value="mRNA"/>
</dbReference>
<dbReference type="EMBL" id="DQ443289">
    <property type="protein sequence ID" value="ABF51378.1"/>
    <property type="molecule type" value="mRNA"/>
</dbReference>
<dbReference type="RefSeq" id="NP_001037586.1">
    <property type="nucleotide sequence ID" value="NM_001044121.1"/>
</dbReference>
<dbReference type="SMR" id="Q1HE00"/>
<dbReference type="FunCoup" id="Q1HE00">
    <property type="interactions" value="1458"/>
</dbReference>
<dbReference type="STRING" id="7091.Q1HE00"/>
<dbReference type="PaxDb" id="7091-BGIBMGA000367-TA"/>
<dbReference type="EnsemblMetazoa" id="NM_001044121.1">
    <property type="protein sequence ID" value="NP_001037586.1"/>
    <property type="gene ID" value="GeneID_732971"/>
</dbReference>
<dbReference type="GeneID" id="732971"/>
<dbReference type="KEGG" id="bmor:732971"/>
<dbReference type="CTD" id="31243"/>
<dbReference type="eggNOG" id="KOG0122">
    <property type="taxonomic scope" value="Eukaryota"/>
</dbReference>
<dbReference type="HOGENOM" id="CLU_034595_0_0_1"/>
<dbReference type="InParanoid" id="Q1HE00"/>
<dbReference type="OrthoDB" id="498353at7088"/>
<dbReference type="Proteomes" id="UP000005204">
    <property type="component" value="Unassembled WGS sequence"/>
</dbReference>
<dbReference type="GO" id="GO:0016282">
    <property type="term" value="C:eukaryotic 43S preinitiation complex"/>
    <property type="evidence" value="ECO:0007669"/>
    <property type="project" value="UniProtKB-UniRule"/>
</dbReference>
<dbReference type="GO" id="GO:0033290">
    <property type="term" value="C:eukaryotic 48S preinitiation complex"/>
    <property type="evidence" value="ECO:0007669"/>
    <property type="project" value="UniProtKB-UniRule"/>
</dbReference>
<dbReference type="GO" id="GO:0005852">
    <property type="term" value="C:eukaryotic translation initiation factor 3 complex"/>
    <property type="evidence" value="ECO:0007669"/>
    <property type="project" value="UniProtKB-UniRule"/>
</dbReference>
<dbReference type="GO" id="GO:0003723">
    <property type="term" value="F:RNA binding"/>
    <property type="evidence" value="ECO:0007669"/>
    <property type="project" value="UniProtKB-UniRule"/>
</dbReference>
<dbReference type="GO" id="GO:0003743">
    <property type="term" value="F:translation initiation factor activity"/>
    <property type="evidence" value="ECO:0007669"/>
    <property type="project" value="UniProtKB-UniRule"/>
</dbReference>
<dbReference type="GO" id="GO:0001732">
    <property type="term" value="P:formation of cytoplasmic translation initiation complex"/>
    <property type="evidence" value="ECO:0007669"/>
    <property type="project" value="UniProtKB-UniRule"/>
</dbReference>
<dbReference type="CDD" id="cd12933">
    <property type="entry name" value="eIF3G"/>
    <property type="match status" value="1"/>
</dbReference>
<dbReference type="CDD" id="cd12408">
    <property type="entry name" value="RRM_eIF3G_like"/>
    <property type="match status" value="1"/>
</dbReference>
<dbReference type="Gene3D" id="3.30.70.330">
    <property type="match status" value="1"/>
</dbReference>
<dbReference type="HAMAP" id="MF_03006">
    <property type="entry name" value="eIF3g"/>
    <property type="match status" value="1"/>
</dbReference>
<dbReference type="InterPro" id="IPR017334">
    <property type="entry name" value="eIF3_g"/>
</dbReference>
<dbReference type="InterPro" id="IPR024675">
    <property type="entry name" value="eIF3g_N"/>
</dbReference>
<dbReference type="InterPro" id="IPR034240">
    <property type="entry name" value="eIF3G_RRM"/>
</dbReference>
<dbReference type="InterPro" id="IPR012677">
    <property type="entry name" value="Nucleotide-bd_a/b_plait_sf"/>
</dbReference>
<dbReference type="InterPro" id="IPR035979">
    <property type="entry name" value="RBD_domain_sf"/>
</dbReference>
<dbReference type="InterPro" id="IPR000504">
    <property type="entry name" value="RRM_dom"/>
</dbReference>
<dbReference type="PANTHER" id="PTHR10352">
    <property type="entry name" value="EUKARYOTIC TRANSLATION INITIATION FACTOR 3 SUBUNIT G"/>
    <property type="match status" value="1"/>
</dbReference>
<dbReference type="Pfam" id="PF12353">
    <property type="entry name" value="eIF3g"/>
    <property type="match status" value="1"/>
</dbReference>
<dbReference type="Pfam" id="PF00076">
    <property type="entry name" value="RRM_1"/>
    <property type="match status" value="1"/>
</dbReference>
<dbReference type="PIRSF" id="PIRSF037949">
    <property type="entry name" value="Transl_init_eIF-3_RNA-bind"/>
    <property type="match status" value="1"/>
</dbReference>
<dbReference type="SMART" id="SM00360">
    <property type="entry name" value="RRM"/>
    <property type="match status" value="1"/>
</dbReference>
<dbReference type="SUPFAM" id="SSF54928">
    <property type="entry name" value="RNA-binding domain, RBD"/>
    <property type="match status" value="1"/>
</dbReference>
<dbReference type="PROSITE" id="PS50102">
    <property type="entry name" value="RRM"/>
    <property type="match status" value="1"/>
</dbReference>
<gene>
    <name evidence="1" type="primary">eIF3-S4</name>
</gene>
<accession>Q1HE00</accession>
<accession>Q1HPW3</accession>
<feature type="chain" id="PRO_0000365405" description="Eukaryotic translation initiation factor 3 subunit G">
    <location>
        <begin position="1"/>
        <end position="274"/>
    </location>
</feature>
<feature type="domain" description="RRM" evidence="1">
    <location>
        <begin position="192"/>
        <end position="270"/>
    </location>
</feature>
<feature type="sequence conflict" description="In Ref. 2; ABF51378." evidence="2" ref="2">
    <original>T</original>
    <variation>A</variation>
    <location>
        <position position="152"/>
    </location>
</feature>
<feature type="sequence conflict" description="In Ref. 2; ABF51378." evidence="2" ref="2">
    <original>S</original>
    <variation>R</variation>
    <location>
        <position position="187"/>
    </location>
</feature>
<evidence type="ECO:0000255" key="1">
    <source>
        <dbReference type="HAMAP-Rule" id="MF_03006"/>
    </source>
</evidence>
<evidence type="ECO:0000305" key="2"/>
<sequence>MPVAEEFQASWADEVEIDQGVLPPPSEVVENGLKIVTEYKYDNDNKKVKIVRTYKIEKRVVSKSIAKRKTWSKFGDSASDKPGPNPATTNVAEDVFMQFITSKEESQRPDDGELDGLKPPSSNVIFKCRTCQGDHLTLYCPFKHTQIAQAKTAEAAKAAEAKVAASNKYIPPSSAGRIPGRDQPPVSREDVTAIRISNLSNFAVEADIDDLVKGFGPVHKLYLAKEKSTGHCKGFAYVHFKFRADAAKAIQSLNGHGYDHLILNVEWSKPPQNN</sequence>
<organism>
    <name type="scientific">Bombyx mori</name>
    <name type="common">Silk moth</name>
    <dbReference type="NCBI Taxonomy" id="7091"/>
    <lineage>
        <taxon>Eukaryota</taxon>
        <taxon>Metazoa</taxon>
        <taxon>Ecdysozoa</taxon>
        <taxon>Arthropoda</taxon>
        <taxon>Hexapoda</taxon>
        <taxon>Insecta</taxon>
        <taxon>Pterygota</taxon>
        <taxon>Neoptera</taxon>
        <taxon>Endopterygota</taxon>
        <taxon>Lepidoptera</taxon>
        <taxon>Glossata</taxon>
        <taxon>Ditrysia</taxon>
        <taxon>Bombycoidea</taxon>
        <taxon>Bombycidae</taxon>
        <taxon>Bombycinae</taxon>
        <taxon>Bombyx</taxon>
    </lineage>
</organism>
<name>EIF3G_BOMMO</name>
<protein>
    <recommendedName>
        <fullName evidence="1">Eukaryotic translation initiation factor 3 subunit G</fullName>
        <shortName evidence="1">eIF3g</shortName>
    </recommendedName>
    <alternativeName>
        <fullName evidence="1">Eukaryotic translation initiation factor 3 RNA-binding subunit</fullName>
        <shortName evidence="1">eIF-3 RNA-binding subunit</shortName>
    </alternativeName>
    <alternativeName>
        <fullName evidence="1">Eukaryotic translation initiation factor 3 subunit 4</fullName>
    </alternativeName>
</protein>
<reference key="1">
    <citation type="submission" date="2006-04" db="EMBL/GenBank/DDBJ databases">
        <title>RNA binding proteins in Bombyx mori.</title>
        <authorList>
            <person name="Wang L.-L."/>
            <person name="Chen K.-P."/>
            <person name="Yao Q."/>
            <person name="Hu Z.-G."/>
            <person name="Gao G.-T."/>
        </authorList>
    </citation>
    <scope>NUCLEOTIDE SEQUENCE [MRNA]</scope>
</reference>
<reference key="2">
    <citation type="submission" date="2005-11" db="EMBL/GenBank/DDBJ databases">
        <title>Blast silkworm EST database for functional genes.</title>
        <authorList>
            <person name="Niu B.L."/>
            <person name="Meng Z.Q."/>
            <person name="Weng H.B."/>
            <person name="Shen W.F."/>
            <person name="He L.H."/>
            <person name="Zheng K.F."/>
            <person name="Ye S.T."/>
            <person name="Lin T.B."/>
            <person name="Chen J.E."/>
        </authorList>
    </citation>
    <scope>NUCLEOTIDE SEQUENCE [LARGE SCALE MRNA]</scope>
</reference>
<keyword id="KW-0963">Cytoplasm</keyword>
<keyword id="KW-0396">Initiation factor</keyword>
<keyword id="KW-0648">Protein biosynthesis</keyword>
<keyword id="KW-1185">Reference proteome</keyword>
<keyword id="KW-0694">RNA-binding</keyword>
<proteinExistence type="evidence at transcript level"/>